<protein>
    <recommendedName>
        <fullName evidence="1">Small ribosomal subunit protein uS2</fullName>
    </recommendedName>
    <alternativeName>
        <fullName evidence="2">30S ribosomal protein S2</fullName>
    </alternativeName>
</protein>
<sequence>MAVVSLSEMMEAGAHFGHQTRRWNPKMSKYIYCARNGVHIIDLVKTALCMNNAYKWTRNAAKSGKRFLFVGTKKQASDVVAQEAVRCGAAYVNQRWLGGMLTNWTTMKARIERLKDLERMESSGAIAMRPKKEAAVLRRELERLQKYLGGLKGMRRLPDVVVLVDQRRESNAVLEARKLDISLVSMLDTNCDPDLCEVPIPCNDDAVRSVQLILGRLADAINEGRKGSNDQRKN</sequence>
<reference key="1">
    <citation type="journal article" date="2003" name="Nature">
        <title>Genome divergence in two Prochlorococcus ecotypes reflects oceanic niche differentiation.</title>
        <authorList>
            <person name="Rocap G."/>
            <person name="Larimer F.W."/>
            <person name="Lamerdin J.E."/>
            <person name="Malfatti S."/>
            <person name="Chain P."/>
            <person name="Ahlgren N.A."/>
            <person name="Arellano A."/>
            <person name="Coleman M."/>
            <person name="Hauser L."/>
            <person name="Hess W.R."/>
            <person name="Johnson Z.I."/>
            <person name="Land M.L."/>
            <person name="Lindell D."/>
            <person name="Post A.F."/>
            <person name="Regala W."/>
            <person name="Shah M."/>
            <person name="Shaw S.L."/>
            <person name="Steglich C."/>
            <person name="Sullivan M.B."/>
            <person name="Ting C.S."/>
            <person name="Tolonen A."/>
            <person name="Webb E.A."/>
            <person name="Zinser E.R."/>
            <person name="Chisholm S.W."/>
        </authorList>
    </citation>
    <scope>NUCLEOTIDE SEQUENCE [LARGE SCALE GENOMIC DNA]</scope>
    <source>
        <strain>CCMP1986 / NIES-2087 / MED4</strain>
    </source>
</reference>
<comment type="similarity">
    <text evidence="1">Belongs to the universal ribosomal protein uS2 family.</text>
</comment>
<name>RS2_PROMP</name>
<gene>
    <name evidence="1" type="primary">rpsB</name>
    <name evidence="1" type="synonym">rps2</name>
    <name type="ordered locus">PMM0753</name>
</gene>
<organism>
    <name type="scientific">Prochlorococcus marinus subsp. pastoris (strain CCMP1986 / NIES-2087 / MED4)</name>
    <dbReference type="NCBI Taxonomy" id="59919"/>
    <lineage>
        <taxon>Bacteria</taxon>
        <taxon>Bacillati</taxon>
        <taxon>Cyanobacteriota</taxon>
        <taxon>Cyanophyceae</taxon>
        <taxon>Synechococcales</taxon>
        <taxon>Prochlorococcaceae</taxon>
        <taxon>Prochlorococcus</taxon>
    </lineage>
</organism>
<feature type="chain" id="PRO_0000134219" description="Small ribosomal subunit protein uS2">
    <location>
        <begin position="1"/>
        <end position="234"/>
    </location>
</feature>
<evidence type="ECO:0000255" key="1">
    <source>
        <dbReference type="HAMAP-Rule" id="MF_00291"/>
    </source>
</evidence>
<evidence type="ECO:0000305" key="2"/>
<keyword id="KW-0687">Ribonucleoprotein</keyword>
<keyword id="KW-0689">Ribosomal protein</keyword>
<accession>Q7V1V0</accession>
<dbReference type="EMBL" id="BX548174">
    <property type="protein sequence ID" value="CAE19212.1"/>
    <property type="molecule type" value="Genomic_DNA"/>
</dbReference>
<dbReference type="RefSeq" id="WP_011132387.1">
    <property type="nucleotide sequence ID" value="NC_005072.1"/>
</dbReference>
<dbReference type="SMR" id="Q7V1V0"/>
<dbReference type="STRING" id="59919.PMM0753"/>
<dbReference type="KEGG" id="pmm:PMM0753"/>
<dbReference type="eggNOG" id="COG0052">
    <property type="taxonomic scope" value="Bacteria"/>
</dbReference>
<dbReference type="HOGENOM" id="CLU_040318_1_2_3"/>
<dbReference type="OrthoDB" id="9808036at2"/>
<dbReference type="Proteomes" id="UP000001026">
    <property type="component" value="Chromosome"/>
</dbReference>
<dbReference type="GO" id="GO:0022627">
    <property type="term" value="C:cytosolic small ribosomal subunit"/>
    <property type="evidence" value="ECO:0007669"/>
    <property type="project" value="TreeGrafter"/>
</dbReference>
<dbReference type="GO" id="GO:0003735">
    <property type="term" value="F:structural constituent of ribosome"/>
    <property type="evidence" value="ECO:0007669"/>
    <property type="project" value="InterPro"/>
</dbReference>
<dbReference type="GO" id="GO:0006412">
    <property type="term" value="P:translation"/>
    <property type="evidence" value="ECO:0007669"/>
    <property type="project" value="UniProtKB-UniRule"/>
</dbReference>
<dbReference type="CDD" id="cd01425">
    <property type="entry name" value="RPS2"/>
    <property type="match status" value="1"/>
</dbReference>
<dbReference type="FunFam" id="1.10.287.610:FF:000001">
    <property type="entry name" value="30S ribosomal protein S2"/>
    <property type="match status" value="1"/>
</dbReference>
<dbReference type="Gene3D" id="3.40.50.10490">
    <property type="entry name" value="Glucose-6-phosphate isomerase like protein, domain 1"/>
    <property type="match status" value="1"/>
</dbReference>
<dbReference type="Gene3D" id="1.10.287.610">
    <property type="entry name" value="Helix hairpin bin"/>
    <property type="match status" value="1"/>
</dbReference>
<dbReference type="HAMAP" id="MF_00291_B">
    <property type="entry name" value="Ribosomal_uS2_B"/>
    <property type="match status" value="1"/>
</dbReference>
<dbReference type="InterPro" id="IPR001865">
    <property type="entry name" value="Ribosomal_uS2"/>
</dbReference>
<dbReference type="InterPro" id="IPR005706">
    <property type="entry name" value="Ribosomal_uS2_bac/mit/plastid"/>
</dbReference>
<dbReference type="InterPro" id="IPR018130">
    <property type="entry name" value="Ribosomal_uS2_CS"/>
</dbReference>
<dbReference type="InterPro" id="IPR023591">
    <property type="entry name" value="Ribosomal_uS2_flav_dom_sf"/>
</dbReference>
<dbReference type="NCBIfam" id="TIGR01011">
    <property type="entry name" value="rpsB_bact"/>
    <property type="match status" value="1"/>
</dbReference>
<dbReference type="PANTHER" id="PTHR12534">
    <property type="entry name" value="30S RIBOSOMAL PROTEIN S2 PROKARYOTIC AND ORGANELLAR"/>
    <property type="match status" value="1"/>
</dbReference>
<dbReference type="PANTHER" id="PTHR12534:SF0">
    <property type="entry name" value="SMALL RIBOSOMAL SUBUNIT PROTEIN US2M"/>
    <property type="match status" value="1"/>
</dbReference>
<dbReference type="Pfam" id="PF00318">
    <property type="entry name" value="Ribosomal_S2"/>
    <property type="match status" value="1"/>
</dbReference>
<dbReference type="PRINTS" id="PR00395">
    <property type="entry name" value="RIBOSOMALS2"/>
</dbReference>
<dbReference type="SUPFAM" id="SSF52313">
    <property type="entry name" value="Ribosomal protein S2"/>
    <property type="match status" value="1"/>
</dbReference>
<dbReference type="PROSITE" id="PS00962">
    <property type="entry name" value="RIBOSOMAL_S2_1"/>
    <property type="match status" value="1"/>
</dbReference>
<proteinExistence type="inferred from homology"/>